<organism evidence="9">
    <name type="scientific">Sulfolobus sp</name>
    <dbReference type="NCBI Taxonomy" id="2288"/>
    <lineage>
        <taxon>Archaea</taxon>
        <taxon>Thermoproteota</taxon>
        <taxon>Thermoprotei</taxon>
        <taxon>Sulfolobales</taxon>
        <taxon>Sulfolobaceae</taxon>
        <taxon>Sulfolobus</taxon>
    </lineage>
</organism>
<keyword id="KW-0004">4Fe-4S</keyword>
<keyword id="KW-0963">Cytoplasm</keyword>
<keyword id="KW-0408">Iron</keyword>
<keyword id="KW-0411">Iron-sulfur</keyword>
<keyword id="KW-0460">Magnesium</keyword>
<keyword id="KW-0479">Metal-binding</keyword>
<keyword id="KW-0560">Oxidoreductase</keyword>
<keyword id="KW-0786">Thiamine pyrophosphate</keyword>
<name>OFOB_SULSP</name>
<evidence type="ECO:0000250" key="1">
    <source>
        <dbReference type="UniProtKB" id="Q96XT4"/>
    </source>
</evidence>
<evidence type="ECO:0000250" key="2">
    <source>
        <dbReference type="UniProtKB" id="Q96Y68"/>
    </source>
</evidence>
<evidence type="ECO:0000269" key="3">
    <source>
    </source>
</evidence>
<evidence type="ECO:0000269" key="4">
    <source>
    </source>
</evidence>
<evidence type="ECO:0000269" key="5">
    <source>
    </source>
</evidence>
<evidence type="ECO:0000303" key="6">
    <source>
    </source>
</evidence>
<evidence type="ECO:0000303" key="7">
    <source>
    </source>
</evidence>
<evidence type="ECO:0000305" key="8">
    <source>
    </source>
</evidence>
<evidence type="ECO:0000312" key="9">
    <source>
        <dbReference type="EMBL" id="BAA10899.1"/>
    </source>
</evidence>
<accession>P72579</accession>
<reference key="1">
    <citation type="journal article" date="1996" name="J. Biochem.">
        <title>2-oxoacid:ferredoxin oxidoreductase from the thermoacidophilic archaeon, Sulfolobus sp. strain 7.</title>
        <authorList>
            <person name="Zhang Q."/>
            <person name="Iwasaki T."/>
            <person name="Wakagi T."/>
            <person name="Oshima T."/>
        </authorList>
    </citation>
    <scope>NUCLEOTIDE SEQUENCE [GENOMIC DNA]</scope>
    <scope>FUNCTION</scope>
    <scope>CATALYTIC ACTIVITY</scope>
    <scope>BIOPHYSICOCHEMICAL PROPERTIES</scope>
    <scope>COFACTOR</scope>
    <scope>MASS SPECTROMETRY</scope>
    <scope>SUBCELLULAR LOCATION</scope>
    <scope>SUBUNIT</scope>
    <scope>SUBSTRATE SPECIFICITY</scope>
    <scope>REACTION MECHANISM</scope>
    <source>
        <strain evidence="9">7</strain>
    </source>
</reference>
<reference key="2">
    <citation type="journal article" date="2001" name="Eur. J. Biochem.">
        <title>Role of a highly conserved YPITP motif in 2-oxoacid:ferredoxin oxidoreductase: heterologous expression of the gene from Sulfolobus sp.strain 7, and characterization of the recombinant and variant enzymes.</title>
        <authorList>
            <person name="Fukuda E."/>
            <person name="Kino H."/>
            <person name="Matsuzawa H."/>
            <person name="Wakagi T."/>
        </authorList>
    </citation>
    <scope>FUNCTION</scope>
    <scope>CATALYTIC ACTIVITY</scope>
    <scope>BIOPHYSICOCHEMICAL PROPERTIES</scope>
    <scope>COFACTOR</scope>
    <scope>SUBCELLULAR LOCATION</scope>
    <scope>SUBUNIT</scope>
    <scope>SUBSTRATE SPECIFICITY</scope>
    <source>
        <strain>7</strain>
    </source>
</reference>
<reference key="3">
    <citation type="journal article" date="2002" name="Biochim. Biophys. Acta">
        <title>Substrate recognition by 2-oxoacid:ferredoxin oxidoreductase from Sulfolobus sp. strain 7.</title>
        <authorList>
            <person name="Fukuda E."/>
            <person name="Wakagi T."/>
        </authorList>
    </citation>
    <scope>FUNCTION</scope>
    <scope>CATALYTIC ACTIVITY</scope>
    <scope>BIOPHYSICOCHEMICAL PROPERTIES</scope>
    <scope>MUTAGENESIS OF LYS-49 AND LEU-123</scope>
    <scope>SUBUNIT</scope>
    <scope>SUBSTRATE SPECIFICITY</scope>
</reference>
<proteinExistence type="evidence at protein level"/>
<protein>
    <recommendedName>
        <fullName evidence="7">2-oxoacid:ferredoxin oxidoreductase subunit beta</fullName>
        <shortName evidence="6">OFOR</shortName>
        <ecNumber evidence="3 4 5">1.2.7.11</ecNumber>
    </recommendedName>
</protein>
<feature type="chain" id="PRO_0000445530" description="2-oxoacid:ferredoxin oxidoreductase subunit beta">
    <location>
        <begin position="1"/>
        <end position="305"/>
    </location>
</feature>
<feature type="binding site" evidence="1">
    <location>
        <position position="12"/>
    </location>
    <ligand>
        <name>[4Fe-4S] cluster</name>
        <dbReference type="ChEBI" id="CHEBI:49883"/>
    </ligand>
</feature>
<feature type="binding site" evidence="1">
    <location>
        <position position="15"/>
    </location>
    <ligand>
        <name>[4Fe-4S] cluster</name>
        <dbReference type="ChEBI" id="CHEBI:49883"/>
    </ligand>
</feature>
<feature type="binding site" evidence="1">
    <location>
        <begin position="44"/>
        <end position="47"/>
    </location>
    <ligand>
        <name>thiamine diphosphate</name>
        <dbReference type="ChEBI" id="CHEBI:58937"/>
    </ligand>
</feature>
<feature type="binding site" evidence="1">
    <location>
        <position position="46"/>
    </location>
    <ligand>
        <name>[4Fe-4S] cluster</name>
        <dbReference type="ChEBI" id="CHEBI:49883"/>
    </ligand>
</feature>
<feature type="binding site" evidence="1">
    <location>
        <position position="65"/>
    </location>
    <ligand>
        <name>thiamine diphosphate</name>
        <dbReference type="ChEBI" id="CHEBI:58937"/>
    </ligand>
</feature>
<feature type="binding site" evidence="1">
    <location>
        <position position="90"/>
    </location>
    <ligand>
        <name>Mg(2+)</name>
        <dbReference type="ChEBI" id="CHEBI:18420"/>
    </ligand>
</feature>
<feature type="binding site" evidence="1">
    <location>
        <begin position="91"/>
        <end position="92"/>
    </location>
    <ligand>
        <name>thiamine diphosphate</name>
        <dbReference type="ChEBI" id="CHEBI:58937"/>
    </ligand>
</feature>
<feature type="binding site" evidence="1">
    <location>
        <position position="118"/>
    </location>
    <ligand>
        <name>Mg(2+)</name>
        <dbReference type="ChEBI" id="CHEBI:18420"/>
    </ligand>
</feature>
<feature type="binding site" evidence="1">
    <location>
        <position position="120"/>
    </location>
    <ligand>
        <name>Mg(2+)</name>
        <dbReference type="ChEBI" id="CHEBI:18420"/>
    </ligand>
</feature>
<feature type="binding site" evidence="1">
    <location>
        <begin position="122"/>
        <end position="123"/>
    </location>
    <ligand>
        <name>thiamine diphosphate</name>
        <dbReference type="ChEBI" id="CHEBI:58937"/>
    </ligand>
</feature>
<feature type="binding site" evidence="1">
    <location>
        <position position="197"/>
    </location>
    <ligand>
        <name>[4Fe-4S] cluster</name>
        <dbReference type="ChEBI" id="CHEBI:49883"/>
    </ligand>
</feature>
<feature type="site" description="Plays an important role in the binding of CoA" evidence="2">
    <location>
        <position position="125"/>
    </location>
</feature>
<feature type="mutagenesis site" description="Strong decrease of the oxidoreductase activity with pyruvate, 2-oxobutyrate and 2-oxoglutarate." evidence="4">
    <original>K</original>
    <variation>I</variation>
    <location>
        <position position="49"/>
    </location>
</feature>
<feature type="mutagenesis site" description="Increase the oxidoreductase activity with pyruvate." evidence="4">
    <original>K</original>
    <variation>R</variation>
    <location>
        <position position="49"/>
    </location>
</feature>
<feature type="mutagenesis site" description="Slight decrease of the oxidoreductase activity with pyruvate, 2-oxobutyrate and 2-oxoglutarate." evidence="4">
    <original>K</original>
    <variation>V</variation>
    <location>
        <position position="49"/>
    </location>
</feature>
<feature type="mutagenesis site" description="Strong decrease of the oxidoreductase activity with pyruvate, 2-oxobutyrate and 2-oxoglutarate." evidence="4">
    <original>L</original>
    <variation>A</variation>
    <variation>I</variation>
    <location>
        <position position="123"/>
    </location>
</feature>
<feature type="mutagenesis site" description="Strong decrease of the oxidoreductase activity with pyruvate and 2-oxobutyrate. However, this mutant shows almost the same activity with 2-oxoglutarate as the wild-type." evidence="4">
    <original>L</original>
    <variation>N</variation>
    <location>
        <position position="123"/>
    </location>
</feature>
<comment type="function">
    <text evidence="3 4 5">Catalyzes the coenzyme A-dependent oxidative decarboxylation of different 2-oxoacids such as 2-oxoglutarate, pyruvate and 2-oxobutyrate to form their CoA derivatives.</text>
</comment>
<comment type="catalytic activity">
    <reaction evidence="3 4 5">
        <text>a 2-oxocarboxylate + 2 oxidized [2Fe-2S]-[ferredoxin] + CoA = an acyl-CoA + 2 reduced [2Fe-2S]-[ferredoxin] + CO2 + H(+)</text>
        <dbReference type="Rhea" id="RHEA:42316"/>
        <dbReference type="Rhea" id="RHEA-COMP:10000"/>
        <dbReference type="Rhea" id="RHEA-COMP:10001"/>
        <dbReference type="ChEBI" id="CHEBI:15378"/>
        <dbReference type="ChEBI" id="CHEBI:16526"/>
        <dbReference type="ChEBI" id="CHEBI:33737"/>
        <dbReference type="ChEBI" id="CHEBI:33738"/>
        <dbReference type="ChEBI" id="CHEBI:35179"/>
        <dbReference type="ChEBI" id="CHEBI:57287"/>
        <dbReference type="ChEBI" id="CHEBI:58342"/>
        <dbReference type="EC" id="1.2.7.11"/>
    </reaction>
</comment>
<comment type="cofactor">
    <cofactor evidence="5 8">
        <name>[4Fe-4S] cluster</name>
        <dbReference type="ChEBI" id="CHEBI:49883"/>
    </cofactor>
    <text evidence="5">Binds 1 [4Fe-4S] cluster per subunit.</text>
</comment>
<comment type="cofactor">
    <cofactor evidence="5 8">
        <name>thiamine diphosphate</name>
        <dbReference type="ChEBI" id="CHEBI:58937"/>
    </cofactor>
    <text evidence="5">Binds 1 thiamine pyrophosphate per subunit.</text>
</comment>
<comment type="cofactor">
    <cofactor evidence="5 8">
        <name>Mg(2+)</name>
        <dbReference type="ChEBI" id="CHEBI:18420"/>
    </cofactor>
    <text evidence="5">Binds 1 Mg(2+) per subunit.</text>
</comment>
<comment type="biophysicochemical properties">
    <kinetics>
        <KM evidence="5">250 uM for pyruvate (at pH 6.8 and 50 degrees Celsius)</KM>
        <KM evidence="4">280 uM for pyruvate</KM>
        <KM evidence="4">480 uM for 2-oxobutyrate</KM>
        <KM evidence="4 5">870 uM for 2-oxoglutarate (at pH 6.8 and 50 degrees Celsius)</KM>
        <Vmax evidence="5">86.0 umol/min/mg enzyme with 2-oxoglutarate as substrate (at pH 6.8 and 50 degrees Celsius)</Vmax>
        <Vmax evidence="4">30.0 umol/min/mg enzyme with pyruvate as substrate</Vmax>
        <Vmax evidence="4">28.0 umol/min/mg enzyme with 2-oxobutyrate as substrate</Vmax>
        <Vmax evidence="4">11.0 umol/min/mg enzyme with 2-oxoglutarate as substrate</Vmax>
        <text evidence="3">kcat is 51 sec(-1) for pyruvate as substrate (PubMed:11683888). kcat is 19 sec(-1) for 2-oxoglutarate as substrate (PubMed:11683888).</text>
    </kinetics>
    <phDependence>
        <text evidence="3">Optimum pH is 8.5.</text>
    </phDependence>
    <temperatureDependence>
        <text evidence="3">Optimum temperature is 90 degrees Celsius.</text>
    </temperatureDependence>
</comment>
<comment type="subunit">
    <text evidence="3 4 5">Heterodimer composed of an alpha and a beta subunit.</text>
</comment>
<comment type="subcellular location">
    <subcellularLocation>
        <location evidence="3 5">Cytoplasm</location>
    </subcellularLocation>
</comment>
<comment type="mass spectrometry" mass="33566.0" method="MALDI" evidence="5"/>
<sequence length="305" mass="33609">MAAFTPQWNDWCPGCGNFGILNAEQQAIVELGVDTKNVVVVSGIGCSGKIPHFFRTPISGVHTLHGRAIAFATGIKLSNPDLVVIVNGGDGDLLGIGAGHFVAAGRRNVDMVVILHDNGVYGLTKGQASPTLKRGEKPKSLPRPNINDAVNPIALAISSGYTFVARGYAYDVKHLKELIKSAIKHKGLALIDVLQPCPTYNDINTKEWYDKRIYKLDTLPDWDPVVKKPEEVNEKIKRAIDKSLEWGDRIPIGIFYQNELVPSYEERIKANSPAYLDYTPAKQLIEKEGKLTTIIDPLLKEREVD</sequence>
<dbReference type="EC" id="1.2.7.11" evidence="3 4 5"/>
<dbReference type="EMBL" id="D64024">
    <property type="protein sequence ID" value="BAA10899.1"/>
    <property type="molecule type" value="Genomic_DNA"/>
</dbReference>
<dbReference type="PIR" id="JC4920">
    <property type="entry name" value="JC4920"/>
</dbReference>
<dbReference type="SMR" id="P72579"/>
<dbReference type="KEGG" id="ag:BAA10899"/>
<dbReference type="BioCyc" id="MetaCyc:MONOMER-11912"/>
<dbReference type="BRENDA" id="1.2.7.11">
    <property type="organism ID" value="6164"/>
</dbReference>
<dbReference type="GO" id="GO:0005737">
    <property type="term" value="C:cytoplasm"/>
    <property type="evidence" value="ECO:0007669"/>
    <property type="project" value="UniProtKB-SubCell"/>
</dbReference>
<dbReference type="GO" id="GO:0018491">
    <property type="term" value="F:2-oxobutyrate synthase activity"/>
    <property type="evidence" value="ECO:0000314"/>
    <property type="project" value="UniProtKB"/>
</dbReference>
<dbReference type="GO" id="GO:0047553">
    <property type="term" value="F:2-oxoglutarate synthase activity"/>
    <property type="evidence" value="ECO:0000314"/>
    <property type="project" value="UniProtKB"/>
</dbReference>
<dbReference type="GO" id="GO:0051539">
    <property type="term" value="F:4 iron, 4 sulfur cluster binding"/>
    <property type="evidence" value="ECO:0000250"/>
    <property type="project" value="UniProtKB"/>
</dbReference>
<dbReference type="GO" id="GO:0000287">
    <property type="term" value="F:magnesium ion binding"/>
    <property type="evidence" value="ECO:0000250"/>
    <property type="project" value="UniProtKB"/>
</dbReference>
<dbReference type="GO" id="GO:0019164">
    <property type="term" value="F:pyruvate synthase activity"/>
    <property type="evidence" value="ECO:0000314"/>
    <property type="project" value="UniProtKB"/>
</dbReference>
<dbReference type="GO" id="GO:0030976">
    <property type="term" value="F:thiamine pyrophosphate binding"/>
    <property type="evidence" value="ECO:0000250"/>
    <property type="project" value="UniProtKB"/>
</dbReference>
<dbReference type="CDD" id="cd03375">
    <property type="entry name" value="TPP_OGFOR"/>
    <property type="match status" value="1"/>
</dbReference>
<dbReference type="FunFam" id="3.40.50.970:FF:000049">
    <property type="entry name" value="2-oxoglutarate ferredoxin oxidoreductase subunit beta"/>
    <property type="match status" value="1"/>
</dbReference>
<dbReference type="Gene3D" id="3.40.50.970">
    <property type="match status" value="1"/>
</dbReference>
<dbReference type="InterPro" id="IPR053399">
    <property type="entry name" value="2-oxoacid:Fd_oxidored_beta"/>
</dbReference>
<dbReference type="InterPro" id="IPR051457">
    <property type="entry name" value="2-oxoacid:Fd_oxidoreductase"/>
</dbReference>
<dbReference type="InterPro" id="IPR011896">
    <property type="entry name" value="OFOB"/>
</dbReference>
<dbReference type="InterPro" id="IPR032686">
    <property type="entry name" value="PFO_beta_C"/>
</dbReference>
<dbReference type="InterPro" id="IPR029061">
    <property type="entry name" value="THDP-binding"/>
</dbReference>
<dbReference type="InterPro" id="IPR011766">
    <property type="entry name" value="TPP_enzyme_TPP-bd"/>
</dbReference>
<dbReference type="NCBIfam" id="NF041171">
    <property type="entry name" value="Oxoac_fdxbeta_Archa"/>
    <property type="match status" value="1"/>
</dbReference>
<dbReference type="NCBIfam" id="TIGR02177">
    <property type="entry name" value="PorB_KorB"/>
    <property type="match status" value="1"/>
</dbReference>
<dbReference type="PANTHER" id="PTHR48084">
    <property type="entry name" value="2-OXOGLUTARATE OXIDOREDUCTASE SUBUNIT KORB-RELATED"/>
    <property type="match status" value="1"/>
</dbReference>
<dbReference type="PANTHER" id="PTHR48084:SF2">
    <property type="entry name" value="PYRUVATE FERREDOXIN_FLAVODOXIN OXIDOREDUCTASE, BETA SUBUNIT"/>
    <property type="match status" value="1"/>
</dbReference>
<dbReference type="Pfam" id="PF12367">
    <property type="entry name" value="PFO_beta_C"/>
    <property type="match status" value="1"/>
</dbReference>
<dbReference type="Pfam" id="PF02775">
    <property type="entry name" value="TPP_enzyme_C"/>
    <property type="match status" value="1"/>
</dbReference>
<dbReference type="SUPFAM" id="SSF52518">
    <property type="entry name" value="Thiamin diphosphate-binding fold (THDP-binding)"/>
    <property type="match status" value="1"/>
</dbReference>